<protein>
    <recommendedName>
        <fullName evidence="1">Ribosome-recycling factor</fullName>
        <shortName evidence="1">RRF</shortName>
    </recommendedName>
    <alternativeName>
        <fullName evidence="1">Ribosome-releasing factor</fullName>
    </alternativeName>
</protein>
<accession>B9KE24</accession>
<name>RRF_CAMLR</name>
<proteinExistence type="inferred from homology"/>
<gene>
    <name evidence="1" type="primary">frr</name>
    <name type="ordered locus">Cla_1508</name>
</gene>
<organism>
    <name type="scientific">Campylobacter lari (strain RM2100 / D67 / ATCC BAA-1060)</name>
    <dbReference type="NCBI Taxonomy" id="306263"/>
    <lineage>
        <taxon>Bacteria</taxon>
        <taxon>Pseudomonadati</taxon>
        <taxon>Campylobacterota</taxon>
        <taxon>Epsilonproteobacteria</taxon>
        <taxon>Campylobacterales</taxon>
        <taxon>Campylobacteraceae</taxon>
        <taxon>Campylobacter</taxon>
    </lineage>
</organism>
<sequence>MLNEIYTKQKQQSDKSLEALKKDFTTIRTGKVNINILDHVHVDYYGSQTPLNQVATVLATDASTISITPWEKPMLKTIESAIAAANIGVNPNNDGESVKLFFPPMTREQREENAKSAKAMGEKAKVAIRNIRKDANDAVKKLEKDKAISEDEAKKAYDEVQKQTDNYTTKIDELVKNKEAELLKV</sequence>
<dbReference type="EMBL" id="CP000932">
    <property type="protein sequence ID" value="ACM64812.1"/>
    <property type="molecule type" value="Genomic_DNA"/>
</dbReference>
<dbReference type="RefSeq" id="WP_012662195.1">
    <property type="nucleotide sequence ID" value="NC_012039.1"/>
</dbReference>
<dbReference type="SMR" id="B9KE24"/>
<dbReference type="STRING" id="306263.Cla_1508"/>
<dbReference type="KEGG" id="cla:CLA_1508"/>
<dbReference type="PATRIC" id="fig|306263.5.peg.1488"/>
<dbReference type="eggNOG" id="COG0233">
    <property type="taxonomic scope" value="Bacteria"/>
</dbReference>
<dbReference type="HOGENOM" id="CLU_073981_2_0_7"/>
<dbReference type="Proteomes" id="UP000007727">
    <property type="component" value="Chromosome"/>
</dbReference>
<dbReference type="GO" id="GO:0005829">
    <property type="term" value="C:cytosol"/>
    <property type="evidence" value="ECO:0007669"/>
    <property type="project" value="GOC"/>
</dbReference>
<dbReference type="GO" id="GO:0043023">
    <property type="term" value="F:ribosomal large subunit binding"/>
    <property type="evidence" value="ECO:0007669"/>
    <property type="project" value="TreeGrafter"/>
</dbReference>
<dbReference type="GO" id="GO:0002184">
    <property type="term" value="P:cytoplasmic translational termination"/>
    <property type="evidence" value="ECO:0007669"/>
    <property type="project" value="TreeGrafter"/>
</dbReference>
<dbReference type="CDD" id="cd00520">
    <property type="entry name" value="RRF"/>
    <property type="match status" value="1"/>
</dbReference>
<dbReference type="FunFam" id="1.10.132.20:FF:000001">
    <property type="entry name" value="Ribosome-recycling factor"/>
    <property type="match status" value="1"/>
</dbReference>
<dbReference type="FunFam" id="3.30.1360.40:FF:000001">
    <property type="entry name" value="Ribosome-recycling factor"/>
    <property type="match status" value="1"/>
</dbReference>
<dbReference type="Gene3D" id="3.30.1360.40">
    <property type="match status" value="1"/>
</dbReference>
<dbReference type="Gene3D" id="1.10.132.20">
    <property type="entry name" value="Ribosome-recycling factor"/>
    <property type="match status" value="1"/>
</dbReference>
<dbReference type="HAMAP" id="MF_00040">
    <property type="entry name" value="RRF"/>
    <property type="match status" value="1"/>
</dbReference>
<dbReference type="InterPro" id="IPR002661">
    <property type="entry name" value="Ribosome_recyc_fac"/>
</dbReference>
<dbReference type="InterPro" id="IPR023584">
    <property type="entry name" value="Ribosome_recyc_fac_dom"/>
</dbReference>
<dbReference type="InterPro" id="IPR036191">
    <property type="entry name" value="RRF_sf"/>
</dbReference>
<dbReference type="NCBIfam" id="TIGR00496">
    <property type="entry name" value="frr"/>
    <property type="match status" value="1"/>
</dbReference>
<dbReference type="PANTHER" id="PTHR20982:SF3">
    <property type="entry name" value="MITOCHONDRIAL RIBOSOME RECYCLING FACTOR PSEUDO 1"/>
    <property type="match status" value="1"/>
</dbReference>
<dbReference type="PANTHER" id="PTHR20982">
    <property type="entry name" value="RIBOSOME RECYCLING FACTOR"/>
    <property type="match status" value="1"/>
</dbReference>
<dbReference type="Pfam" id="PF01765">
    <property type="entry name" value="RRF"/>
    <property type="match status" value="1"/>
</dbReference>
<dbReference type="SUPFAM" id="SSF55194">
    <property type="entry name" value="Ribosome recycling factor, RRF"/>
    <property type="match status" value="1"/>
</dbReference>
<reference key="1">
    <citation type="journal article" date="2008" name="Foodborne Pathog. Dis.">
        <title>The complete genome sequence and analysis of the human pathogen Campylobacter lari.</title>
        <authorList>
            <person name="Miller W.G."/>
            <person name="Wang G."/>
            <person name="Binnewies T.T."/>
            <person name="Parker C.T."/>
        </authorList>
    </citation>
    <scope>NUCLEOTIDE SEQUENCE [LARGE SCALE GENOMIC DNA]</scope>
    <source>
        <strain>RM2100 / D67 / ATCC BAA-1060</strain>
    </source>
</reference>
<comment type="function">
    <text evidence="1">Responsible for the release of ribosomes from messenger RNA at the termination of protein biosynthesis. May increase the efficiency of translation by recycling ribosomes from one round of translation to another.</text>
</comment>
<comment type="subcellular location">
    <subcellularLocation>
        <location evidence="1">Cytoplasm</location>
    </subcellularLocation>
</comment>
<comment type="similarity">
    <text evidence="1">Belongs to the RRF family.</text>
</comment>
<keyword id="KW-0963">Cytoplasm</keyword>
<keyword id="KW-0648">Protein biosynthesis</keyword>
<keyword id="KW-1185">Reference proteome</keyword>
<feature type="chain" id="PRO_1000194909" description="Ribosome-recycling factor">
    <location>
        <begin position="1"/>
        <end position="185"/>
    </location>
</feature>
<evidence type="ECO:0000255" key="1">
    <source>
        <dbReference type="HAMAP-Rule" id="MF_00040"/>
    </source>
</evidence>